<proteinExistence type="inferred from homology"/>
<comment type="function">
    <text evidence="1">Forms part of the ribosomal stalk which helps the ribosome interact with GTP-bound translation factors. Is thus essential for accurate translation.</text>
</comment>
<comment type="subunit">
    <text evidence="1">Homodimer. Part of the ribosomal stalk of the 50S ribosomal subunit. Forms a multimeric L10(L12)X complex, where L10 forms an elongated spine to which 2 to 4 L12 dimers bind in a sequential fashion. Binds GTP-bound translation factors.</text>
</comment>
<comment type="similarity">
    <text evidence="1">Belongs to the bacterial ribosomal protein bL12 family.</text>
</comment>
<name>RL7_SALPK</name>
<accession>B5BJQ2</accession>
<evidence type="ECO:0000255" key="1">
    <source>
        <dbReference type="HAMAP-Rule" id="MF_00368"/>
    </source>
</evidence>
<evidence type="ECO:0000305" key="2"/>
<keyword id="KW-0687">Ribonucleoprotein</keyword>
<keyword id="KW-0689">Ribosomal protein</keyword>
<dbReference type="EMBL" id="FM200053">
    <property type="protein sequence ID" value="CAR61988.1"/>
    <property type="molecule type" value="Genomic_DNA"/>
</dbReference>
<dbReference type="RefSeq" id="WP_000028882.1">
    <property type="nucleotide sequence ID" value="NC_011147.1"/>
</dbReference>
<dbReference type="SMR" id="B5BJQ2"/>
<dbReference type="GeneID" id="89551069"/>
<dbReference type="KEGG" id="sek:SSPA3705"/>
<dbReference type="HOGENOM" id="CLU_086499_3_2_6"/>
<dbReference type="Proteomes" id="UP000001869">
    <property type="component" value="Chromosome"/>
</dbReference>
<dbReference type="GO" id="GO:0022625">
    <property type="term" value="C:cytosolic large ribosomal subunit"/>
    <property type="evidence" value="ECO:0007669"/>
    <property type="project" value="TreeGrafter"/>
</dbReference>
<dbReference type="GO" id="GO:0003729">
    <property type="term" value="F:mRNA binding"/>
    <property type="evidence" value="ECO:0007669"/>
    <property type="project" value="TreeGrafter"/>
</dbReference>
<dbReference type="GO" id="GO:0003735">
    <property type="term" value="F:structural constituent of ribosome"/>
    <property type="evidence" value="ECO:0007669"/>
    <property type="project" value="InterPro"/>
</dbReference>
<dbReference type="GO" id="GO:0006412">
    <property type="term" value="P:translation"/>
    <property type="evidence" value="ECO:0007669"/>
    <property type="project" value="UniProtKB-UniRule"/>
</dbReference>
<dbReference type="CDD" id="cd00387">
    <property type="entry name" value="Ribosomal_L7_L12"/>
    <property type="match status" value="1"/>
</dbReference>
<dbReference type="FunFam" id="1.20.5.710:FF:000001">
    <property type="entry name" value="50S ribosomal protein L7/L12"/>
    <property type="match status" value="1"/>
</dbReference>
<dbReference type="FunFam" id="3.30.1390.10:FF:000001">
    <property type="entry name" value="50S ribosomal protein L7/L12"/>
    <property type="match status" value="1"/>
</dbReference>
<dbReference type="Gene3D" id="3.30.1390.10">
    <property type="match status" value="1"/>
</dbReference>
<dbReference type="Gene3D" id="1.20.5.710">
    <property type="entry name" value="Single helix bin"/>
    <property type="match status" value="1"/>
</dbReference>
<dbReference type="HAMAP" id="MF_00368">
    <property type="entry name" value="Ribosomal_bL12"/>
    <property type="match status" value="1"/>
</dbReference>
<dbReference type="InterPro" id="IPR000206">
    <property type="entry name" value="Ribosomal_bL12"/>
</dbReference>
<dbReference type="InterPro" id="IPR013823">
    <property type="entry name" value="Ribosomal_bL12_C"/>
</dbReference>
<dbReference type="InterPro" id="IPR014719">
    <property type="entry name" value="Ribosomal_bL12_C/ClpS-like"/>
</dbReference>
<dbReference type="InterPro" id="IPR008932">
    <property type="entry name" value="Ribosomal_bL12_oligo"/>
</dbReference>
<dbReference type="InterPro" id="IPR036235">
    <property type="entry name" value="Ribosomal_bL12_oligo_N_sf"/>
</dbReference>
<dbReference type="NCBIfam" id="TIGR00855">
    <property type="entry name" value="L12"/>
    <property type="match status" value="1"/>
</dbReference>
<dbReference type="PANTHER" id="PTHR45987">
    <property type="entry name" value="39S RIBOSOMAL PROTEIN L12"/>
    <property type="match status" value="1"/>
</dbReference>
<dbReference type="PANTHER" id="PTHR45987:SF4">
    <property type="entry name" value="LARGE RIBOSOMAL SUBUNIT PROTEIN BL12M"/>
    <property type="match status" value="1"/>
</dbReference>
<dbReference type="Pfam" id="PF00542">
    <property type="entry name" value="Ribosomal_L12"/>
    <property type="match status" value="1"/>
</dbReference>
<dbReference type="Pfam" id="PF16320">
    <property type="entry name" value="Ribosomal_L12_N"/>
    <property type="match status" value="1"/>
</dbReference>
<dbReference type="SUPFAM" id="SSF54736">
    <property type="entry name" value="ClpS-like"/>
    <property type="match status" value="1"/>
</dbReference>
<dbReference type="SUPFAM" id="SSF48300">
    <property type="entry name" value="Ribosomal protein L7/12, oligomerisation (N-terminal) domain"/>
    <property type="match status" value="1"/>
</dbReference>
<sequence>MSITKDQIIEAVSAMSVMDVVELISAMEEKFGVSAAAAVAVAAGPAEAAEEKTEFDVILKAAGANKVAVIKAVRGATGLGLKEAKDLVESAPAALKEGVSKDDAEALKKSLEEAGAEVEVK</sequence>
<organism>
    <name type="scientific">Salmonella paratyphi A (strain AKU_12601)</name>
    <dbReference type="NCBI Taxonomy" id="554290"/>
    <lineage>
        <taxon>Bacteria</taxon>
        <taxon>Pseudomonadati</taxon>
        <taxon>Pseudomonadota</taxon>
        <taxon>Gammaproteobacteria</taxon>
        <taxon>Enterobacterales</taxon>
        <taxon>Enterobacteriaceae</taxon>
        <taxon>Salmonella</taxon>
    </lineage>
</organism>
<gene>
    <name evidence="1" type="primary">rplL</name>
    <name type="ordered locus">SSPA3705</name>
</gene>
<feature type="chain" id="PRO_1000121487" description="Large ribosomal subunit protein bL12">
    <location>
        <begin position="1"/>
        <end position="121"/>
    </location>
</feature>
<reference key="1">
    <citation type="journal article" date="2009" name="BMC Genomics">
        <title>Pseudogene accumulation in the evolutionary histories of Salmonella enterica serovars Paratyphi A and Typhi.</title>
        <authorList>
            <person name="Holt K.E."/>
            <person name="Thomson N.R."/>
            <person name="Wain J."/>
            <person name="Langridge G.C."/>
            <person name="Hasan R."/>
            <person name="Bhutta Z.A."/>
            <person name="Quail M.A."/>
            <person name="Norbertczak H."/>
            <person name="Walker D."/>
            <person name="Simmonds M."/>
            <person name="White B."/>
            <person name="Bason N."/>
            <person name="Mungall K."/>
            <person name="Dougan G."/>
            <person name="Parkhill J."/>
        </authorList>
    </citation>
    <scope>NUCLEOTIDE SEQUENCE [LARGE SCALE GENOMIC DNA]</scope>
    <source>
        <strain>AKU_12601</strain>
    </source>
</reference>
<protein>
    <recommendedName>
        <fullName evidence="1">Large ribosomal subunit protein bL12</fullName>
    </recommendedName>
    <alternativeName>
        <fullName evidence="2">50S ribosomal protein L7/L12</fullName>
    </alternativeName>
</protein>